<keyword id="KW-0997">Cell inner membrane</keyword>
<keyword id="KW-1003">Cell membrane</keyword>
<keyword id="KW-0472">Membrane</keyword>
<keyword id="KW-0762">Sugar transport</keyword>
<keyword id="KW-0812">Transmembrane</keyword>
<keyword id="KW-1133">Transmembrane helix</keyword>
<keyword id="KW-0813">Transport</keyword>
<accession>Q5PLF0</accession>
<name>NANT_SALPA</name>
<protein>
    <recommendedName>
        <fullName evidence="1">Sialic acid transporter NanT</fullName>
    </recommendedName>
    <alternativeName>
        <fullName evidence="1">Sialic acid permease</fullName>
    </alternativeName>
    <alternativeName>
        <fullName evidence="1">Sialic acid/H(+) symporter</fullName>
    </alternativeName>
</protein>
<dbReference type="EMBL" id="CP000026">
    <property type="protein sequence ID" value="AAV79030.1"/>
    <property type="molecule type" value="Genomic_DNA"/>
</dbReference>
<dbReference type="RefSeq" id="WP_000108076.1">
    <property type="nucleotide sequence ID" value="NC_006511.1"/>
</dbReference>
<dbReference type="SMR" id="Q5PLF0"/>
<dbReference type="KEGG" id="spt:SPA3206"/>
<dbReference type="HOGENOM" id="CLU_001265_46_8_6"/>
<dbReference type="Proteomes" id="UP000008185">
    <property type="component" value="Chromosome"/>
</dbReference>
<dbReference type="GO" id="GO:0005886">
    <property type="term" value="C:plasma membrane"/>
    <property type="evidence" value="ECO:0007669"/>
    <property type="project" value="UniProtKB-SubCell"/>
</dbReference>
<dbReference type="GO" id="GO:0046943">
    <property type="term" value="F:carboxylic acid transmembrane transporter activity"/>
    <property type="evidence" value="ECO:0007669"/>
    <property type="project" value="TreeGrafter"/>
</dbReference>
<dbReference type="GO" id="GO:0015538">
    <property type="term" value="F:sialic acid:proton symporter activity"/>
    <property type="evidence" value="ECO:0007669"/>
    <property type="project" value="UniProtKB-UniRule"/>
</dbReference>
<dbReference type="CDD" id="cd17316">
    <property type="entry name" value="MFS_SV2_like"/>
    <property type="match status" value="1"/>
</dbReference>
<dbReference type="FunFam" id="1.20.1250.20:FF:000027">
    <property type="entry name" value="Sialic acid transporter NanT"/>
    <property type="match status" value="1"/>
</dbReference>
<dbReference type="FunFam" id="1.20.1250.20:FF:000038">
    <property type="entry name" value="Sialic acid transporter NanT"/>
    <property type="match status" value="1"/>
</dbReference>
<dbReference type="Gene3D" id="1.20.1250.20">
    <property type="entry name" value="MFS general substrate transporter like domains"/>
    <property type="match status" value="2"/>
</dbReference>
<dbReference type="HAMAP" id="MF_01238">
    <property type="entry name" value="MFS_NanT"/>
    <property type="match status" value="1"/>
</dbReference>
<dbReference type="InterPro" id="IPR011701">
    <property type="entry name" value="MFS"/>
</dbReference>
<dbReference type="InterPro" id="IPR020846">
    <property type="entry name" value="MFS_dom"/>
</dbReference>
<dbReference type="InterPro" id="IPR036259">
    <property type="entry name" value="MFS_trans_sf"/>
</dbReference>
<dbReference type="InterPro" id="IPR004742">
    <property type="entry name" value="SA_transporter"/>
</dbReference>
<dbReference type="NCBIfam" id="TIGR00891">
    <property type="entry name" value="2A0112"/>
    <property type="match status" value="1"/>
</dbReference>
<dbReference type="NCBIfam" id="NF003024">
    <property type="entry name" value="PRK03893.1"/>
    <property type="match status" value="1"/>
</dbReference>
<dbReference type="PANTHER" id="PTHR23508">
    <property type="entry name" value="CARBOXYLIC ACID TRANSPORTER PROTEIN HOMOLOG"/>
    <property type="match status" value="1"/>
</dbReference>
<dbReference type="PANTHER" id="PTHR23508:SF3">
    <property type="entry name" value="SIALIC ACID TRANSPORTER NANT"/>
    <property type="match status" value="1"/>
</dbReference>
<dbReference type="Pfam" id="PF07690">
    <property type="entry name" value="MFS_1"/>
    <property type="match status" value="2"/>
</dbReference>
<dbReference type="SUPFAM" id="SSF103473">
    <property type="entry name" value="MFS general substrate transporter"/>
    <property type="match status" value="1"/>
</dbReference>
<dbReference type="PROSITE" id="PS50850">
    <property type="entry name" value="MFS"/>
    <property type="match status" value="1"/>
</dbReference>
<sequence length="496" mass="53647">MSTSTQNIPWYRHLNRAQWRAFSAAWLGYLLDGFDFVLIALVLTEVQSEFGLTTVQAASLISAAFISRWFGGLLLGAMGDRYGRRLAMVSSIILFSVGTLACGFAPGYTTMFIARLVIGMGMAGEYGSSATYVIESWPKHLRNKASGFLISGFSVGAVVAAQVYSLVVPVWGWRALFFIGILPIIFALWLRKNIPEAEDWKEKHAGKAPVRTMVDILYRGEHRIINMLMTFAAAAALWFCFAGNLQNAAIVAGLGLLCAVIFISFMVQSSGKRWPTGVMLMLVVLFAFLYSWPIQALLPTYLKTELAYDPHTVANVLFFSGFGAAVGCCVGGFLGDWLGTRKAYVCSLLASQILIIPVFAIGGTNVWVLGLLLFFQQMLGQGIAGILPKLIGGYFDTDQRAAGLGFTYNVGALGGALAPILGALIAQRLDLGTALASLSFSLTFVVILLIGLDMPSRVQRWLRPEALRTHDAIDDKPFSGAVPLGSGKGAFVKTKS</sequence>
<reference key="1">
    <citation type="journal article" date="2004" name="Nat. Genet.">
        <title>Comparison of genome degradation in Paratyphi A and Typhi, human-restricted serovars of Salmonella enterica that cause typhoid.</title>
        <authorList>
            <person name="McClelland M."/>
            <person name="Sanderson K.E."/>
            <person name="Clifton S.W."/>
            <person name="Latreille P."/>
            <person name="Porwollik S."/>
            <person name="Sabo A."/>
            <person name="Meyer R."/>
            <person name="Bieri T."/>
            <person name="Ozersky P."/>
            <person name="McLellan M."/>
            <person name="Harkins C.R."/>
            <person name="Wang C."/>
            <person name="Nguyen C."/>
            <person name="Berghoff A."/>
            <person name="Elliott G."/>
            <person name="Kohlberg S."/>
            <person name="Strong C."/>
            <person name="Du F."/>
            <person name="Carter J."/>
            <person name="Kremizki C."/>
            <person name="Layman D."/>
            <person name="Leonard S."/>
            <person name="Sun H."/>
            <person name="Fulton L."/>
            <person name="Nash W."/>
            <person name="Miner T."/>
            <person name="Minx P."/>
            <person name="Delehaunty K."/>
            <person name="Fronick C."/>
            <person name="Magrini V."/>
            <person name="Nhan M."/>
            <person name="Warren W."/>
            <person name="Florea L."/>
            <person name="Spieth J."/>
            <person name="Wilson R.K."/>
        </authorList>
    </citation>
    <scope>NUCLEOTIDE SEQUENCE [LARGE SCALE GENOMIC DNA]</scope>
    <source>
        <strain>ATCC 9150 / SARB42</strain>
    </source>
</reference>
<comment type="function">
    <text evidence="1">Catalyzes the proton-dependent transport of sialic acid.</text>
</comment>
<comment type="catalytic activity">
    <reaction evidence="1">
        <text>N-acetylneuraminate(in) + H(+)(in) = N-acetylneuraminate(out) + H(+)(out)</text>
        <dbReference type="Rhea" id="RHEA:28987"/>
        <dbReference type="ChEBI" id="CHEBI:15378"/>
        <dbReference type="ChEBI" id="CHEBI:35418"/>
    </reaction>
</comment>
<comment type="subcellular location">
    <subcellularLocation>
        <location evidence="1">Cell inner membrane</location>
        <topology evidence="1">Multi-pass membrane protein</topology>
    </subcellularLocation>
</comment>
<comment type="similarity">
    <text evidence="1">Belongs to the major facilitator superfamily. Sialate:H(+) symporter (SHS) (TC 2.A.1.12) family.</text>
</comment>
<gene>
    <name evidence="1" type="primary">nanT</name>
    <name type="ordered locus">SPA3206</name>
</gene>
<feature type="chain" id="PRO_1000214063" description="Sialic acid transporter NanT">
    <location>
        <begin position="1"/>
        <end position="496"/>
    </location>
</feature>
<feature type="transmembrane region" description="Helical" evidence="1">
    <location>
        <begin position="22"/>
        <end position="42"/>
    </location>
</feature>
<feature type="transmembrane region" description="Helical" evidence="1">
    <location>
        <begin position="58"/>
        <end position="78"/>
    </location>
</feature>
<feature type="transmembrane region" description="Helical" evidence="1">
    <location>
        <begin position="86"/>
        <end position="106"/>
    </location>
</feature>
<feature type="transmembrane region" description="Helical" evidence="1">
    <location>
        <begin position="116"/>
        <end position="136"/>
    </location>
</feature>
<feature type="transmembrane region" description="Helical" evidence="1">
    <location>
        <begin position="148"/>
        <end position="168"/>
    </location>
</feature>
<feature type="transmembrane region" description="Helical" evidence="1">
    <location>
        <begin position="170"/>
        <end position="190"/>
    </location>
</feature>
<feature type="transmembrane region" description="Helical" evidence="1">
    <location>
        <begin position="224"/>
        <end position="244"/>
    </location>
</feature>
<feature type="transmembrane region" description="Helical" evidence="1">
    <location>
        <begin position="247"/>
        <end position="267"/>
    </location>
</feature>
<feature type="transmembrane region" description="Helical" evidence="1">
    <location>
        <begin position="278"/>
        <end position="298"/>
    </location>
</feature>
<feature type="transmembrane region" description="Helical" evidence="1">
    <location>
        <begin position="313"/>
        <end position="333"/>
    </location>
</feature>
<feature type="transmembrane region" description="Helical" evidence="1">
    <location>
        <begin position="353"/>
        <end position="373"/>
    </location>
</feature>
<feature type="transmembrane region" description="Helical" evidence="1">
    <location>
        <begin position="374"/>
        <end position="394"/>
    </location>
</feature>
<feature type="transmembrane region" description="Helical" evidence="1">
    <location>
        <begin position="406"/>
        <end position="426"/>
    </location>
</feature>
<feature type="transmembrane region" description="Helical" evidence="1">
    <location>
        <begin position="431"/>
        <end position="451"/>
    </location>
</feature>
<evidence type="ECO:0000255" key="1">
    <source>
        <dbReference type="HAMAP-Rule" id="MF_01238"/>
    </source>
</evidence>
<proteinExistence type="inferred from homology"/>
<organism>
    <name type="scientific">Salmonella paratyphi A (strain ATCC 9150 / SARB42)</name>
    <dbReference type="NCBI Taxonomy" id="295319"/>
    <lineage>
        <taxon>Bacteria</taxon>
        <taxon>Pseudomonadati</taxon>
        <taxon>Pseudomonadota</taxon>
        <taxon>Gammaproteobacteria</taxon>
        <taxon>Enterobacterales</taxon>
        <taxon>Enterobacteriaceae</taxon>
        <taxon>Salmonella</taxon>
    </lineage>
</organism>